<proteinExistence type="inferred from homology"/>
<feature type="chain" id="PRO_1000068643" description="Probable potassium transport system protein Kup">
    <location>
        <begin position="1"/>
        <end position="630"/>
    </location>
</feature>
<feature type="transmembrane region" description="Helical" evidence="1">
    <location>
        <begin position="17"/>
        <end position="37"/>
    </location>
</feature>
<feature type="transmembrane region" description="Helical" evidence="1">
    <location>
        <begin position="51"/>
        <end position="71"/>
    </location>
</feature>
<feature type="transmembrane region" description="Helical" evidence="1">
    <location>
        <begin position="105"/>
        <end position="125"/>
    </location>
</feature>
<feature type="transmembrane region" description="Helical" evidence="1">
    <location>
        <begin position="144"/>
        <end position="164"/>
    </location>
</feature>
<feature type="transmembrane region" description="Helical" evidence="1">
    <location>
        <begin position="175"/>
        <end position="195"/>
    </location>
</feature>
<feature type="transmembrane region" description="Helical" evidence="1">
    <location>
        <begin position="218"/>
        <end position="238"/>
    </location>
</feature>
<feature type="transmembrane region" description="Helical" evidence="1">
    <location>
        <begin position="255"/>
        <end position="275"/>
    </location>
</feature>
<feature type="transmembrane region" description="Helical" evidence="1">
    <location>
        <begin position="283"/>
        <end position="303"/>
    </location>
</feature>
<feature type="transmembrane region" description="Helical" evidence="1">
    <location>
        <begin position="344"/>
        <end position="364"/>
    </location>
</feature>
<feature type="transmembrane region" description="Helical" evidence="1">
    <location>
        <begin position="374"/>
        <end position="394"/>
    </location>
</feature>
<feature type="transmembrane region" description="Helical" evidence="1">
    <location>
        <begin position="402"/>
        <end position="422"/>
    </location>
</feature>
<feature type="transmembrane region" description="Helical" evidence="1">
    <location>
        <begin position="428"/>
        <end position="448"/>
    </location>
</feature>
<accession>A3NA39</accession>
<protein>
    <recommendedName>
        <fullName evidence="1">Probable potassium transport system protein Kup</fullName>
    </recommendedName>
</protein>
<comment type="function">
    <text evidence="1">Transport of potassium into the cell. Likely operates as a K(+):H(+) symporter.</text>
</comment>
<comment type="catalytic activity">
    <reaction evidence="1">
        <text>K(+)(in) + H(+)(in) = K(+)(out) + H(+)(out)</text>
        <dbReference type="Rhea" id="RHEA:28490"/>
        <dbReference type="ChEBI" id="CHEBI:15378"/>
        <dbReference type="ChEBI" id="CHEBI:29103"/>
    </reaction>
    <physiologicalReaction direction="right-to-left" evidence="1">
        <dbReference type="Rhea" id="RHEA:28492"/>
    </physiologicalReaction>
</comment>
<comment type="subcellular location">
    <subcellularLocation>
        <location evidence="1">Cell inner membrane</location>
        <topology evidence="1">Multi-pass membrane protein</topology>
    </subcellularLocation>
</comment>
<comment type="similarity">
    <text evidence="1">Belongs to the HAK/KUP transporter (TC 2.A.72) family.</text>
</comment>
<keyword id="KW-0997">Cell inner membrane</keyword>
<keyword id="KW-1003">Cell membrane</keyword>
<keyword id="KW-0406">Ion transport</keyword>
<keyword id="KW-0472">Membrane</keyword>
<keyword id="KW-0630">Potassium</keyword>
<keyword id="KW-0633">Potassium transport</keyword>
<keyword id="KW-0769">Symport</keyword>
<keyword id="KW-0812">Transmembrane</keyword>
<keyword id="KW-1133">Transmembrane helix</keyword>
<keyword id="KW-0813">Transport</keyword>
<name>KUP_BURP6</name>
<sequence length="630" mass="68633">MTDTNHSSMRQHSLQSLAIAAIGVVFGDIGTSPLYSLKEAFSPAHGIPLTPSAILGVISLLFWAIILVVGIKYVLFVMRADNNGEGGVLALMALSLRPLNPKSRITGLMMALGIFGACMFYGDAVITPAISVMSAVEGLEVATPQLSHLVLPITIVILIALFWIQRHGTATVGKLFGPIMVLWFVTIAALGIYHIARAPMIVSAINPYYAFSFMSEHVLLAYVVLGSVVLVLTGAEALYADMGHFGAKPIRLAAYVLVMPSLVLNYFGQGALLLLDPKAIENPFFLLAPQWAALPLVVLSTVATVIASQAVISGAYSLTSQAIQLGYVPRMKILHTSELAIGQIYVPVVNWLLLFVILCIVIGFKSSDNLAAAYGIAVTATMVITTILAAVVMVKVWNWNKLLVAMIIGVFLVIDLGFFGANLLKVEQGGWLPLGIGALLFFLLMTWYKGRHIVKERTAADGIPLAPFLQGLLAHPPHRVSGTAIYLTGNDTLVPVSLLHNLKHNKVLHERTIFMTFVTRDIPYVKDHERVTVHDAGEGLYIVKAEYGFNETPDVKAVLEEVARQRGMTFELMDTSFFLARETVVPTHLPGMSIWRERVFAWMHQNAAKPTDFFAIPANRVVELGTKIEI</sequence>
<gene>
    <name evidence="1" type="primary">kup</name>
    <name type="ordered locus">BURPS668_2175</name>
</gene>
<dbReference type="EMBL" id="CP000570">
    <property type="protein sequence ID" value="ABN85232.1"/>
    <property type="molecule type" value="Genomic_DNA"/>
</dbReference>
<dbReference type="RefSeq" id="WP_004521342.1">
    <property type="nucleotide sequence ID" value="NC_009074.1"/>
</dbReference>
<dbReference type="KEGG" id="bpd:BURPS668_2175"/>
<dbReference type="HOGENOM" id="CLU_008142_4_2_4"/>
<dbReference type="GO" id="GO:0005886">
    <property type="term" value="C:plasma membrane"/>
    <property type="evidence" value="ECO:0007669"/>
    <property type="project" value="UniProtKB-SubCell"/>
</dbReference>
<dbReference type="GO" id="GO:0015079">
    <property type="term" value="F:potassium ion transmembrane transporter activity"/>
    <property type="evidence" value="ECO:0007669"/>
    <property type="project" value="UniProtKB-UniRule"/>
</dbReference>
<dbReference type="GO" id="GO:0015293">
    <property type="term" value="F:symporter activity"/>
    <property type="evidence" value="ECO:0007669"/>
    <property type="project" value="UniProtKB-UniRule"/>
</dbReference>
<dbReference type="HAMAP" id="MF_01522">
    <property type="entry name" value="Kup"/>
    <property type="match status" value="1"/>
</dbReference>
<dbReference type="InterPro" id="IPR003855">
    <property type="entry name" value="K+_transporter"/>
</dbReference>
<dbReference type="InterPro" id="IPR053952">
    <property type="entry name" value="K_trans_C"/>
</dbReference>
<dbReference type="InterPro" id="IPR053951">
    <property type="entry name" value="K_trans_N"/>
</dbReference>
<dbReference type="InterPro" id="IPR023051">
    <property type="entry name" value="Kup"/>
</dbReference>
<dbReference type="PANTHER" id="PTHR30540:SF79">
    <property type="entry name" value="LOW AFFINITY POTASSIUM TRANSPORT SYSTEM PROTEIN KUP"/>
    <property type="match status" value="1"/>
</dbReference>
<dbReference type="PANTHER" id="PTHR30540">
    <property type="entry name" value="OSMOTIC STRESS POTASSIUM TRANSPORTER"/>
    <property type="match status" value="1"/>
</dbReference>
<dbReference type="Pfam" id="PF02705">
    <property type="entry name" value="K_trans"/>
    <property type="match status" value="1"/>
</dbReference>
<dbReference type="Pfam" id="PF22776">
    <property type="entry name" value="K_trans_C"/>
    <property type="match status" value="1"/>
</dbReference>
<reference key="1">
    <citation type="journal article" date="2010" name="Genome Biol. Evol.">
        <title>Continuing evolution of Burkholderia mallei through genome reduction and large-scale rearrangements.</title>
        <authorList>
            <person name="Losada L."/>
            <person name="Ronning C.M."/>
            <person name="DeShazer D."/>
            <person name="Woods D."/>
            <person name="Fedorova N."/>
            <person name="Kim H.S."/>
            <person name="Shabalina S.A."/>
            <person name="Pearson T.R."/>
            <person name="Brinkac L."/>
            <person name="Tan P."/>
            <person name="Nandi T."/>
            <person name="Crabtree J."/>
            <person name="Badger J."/>
            <person name="Beckstrom-Sternberg S."/>
            <person name="Saqib M."/>
            <person name="Schutzer S.E."/>
            <person name="Keim P."/>
            <person name="Nierman W.C."/>
        </authorList>
    </citation>
    <scope>NUCLEOTIDE SEQUENCE [LARGE SCALE GENOMIC DNA]</scope>
    <source>
        <strain>668</strain>
    </source>
</reference>
<organism>
    <name type="scientific">Burkholderia pseudomallei (strain 668)</name>
    <dbReference type="NCBI Taxonomy" id="320373"/>
    <lineage>
        <taxon>Bacteria</taxon>
        <taxon>Pseudomonadati</taxon>
        <taxon>Pseudomonadota</taxon>
        <taxon>Betaproteobacteria</taxon>
        <taxon>Burkholderiales</taxon>
        <taxon>Burkholderiaceae</taxon>
        <taxon>Burkholderia</taxon>
        <taxon>pseudomallei group</taxon>
    </lineage>
</organism>
<evidence type="ECO:0000255" key="1">
    <source>
        <dbReference type="HAMAP-Rule" id="MF_01522"/>
    </source>
</evidence>